<sequence>MFCVAPPESEAKMNITKGGLVLFSANSNSSCMELSKKIAERLGVEMGKVQVYQEPDRETRVQIQESVRGKDVFIIQTVSKDVNTTIMELLIMVYACKTSCAKSIIGVVPYFPYSKQCKMRKRGSIVSKLLASMMCKAGLTHLITMDLHQKEIQGFFNIPVDNLRASPFLLQYIQEEIPDYRNAVIVAKSPASAKRAQSFAERLRLGIAVIHGEAQDAESDLVDGRHSPPMVRSAAAIHPSLEIPMLIPKEKPPITVVGDVGGRIAIIVDDIIDDVDSFLAAAETLKERGAYKIFVMATHGLLSSDAPLLIEESAIDEVVVTNTIPHEIQKLQCPKIKTVDISMTLSEAIRRIHNGESMSYLFRNIGLDD</sequence>
<accession>A2VDS0</accession>
<feature type="chain" id="PRO_0000284956" description="Phosphoribosyl pyrophosphate synthase-associated protein 2">
    <location>
        <begin position="1"/>
        <end position="369"/>
    </location>
</feature>
<feature type="modified residue" description="N-acetylmethionine" evidence="2">
    <location>
        <position position="1"/>
    </location>
</feature>
<feature type="modified residue" description="Phosphoserine" evidence="2">
    <location>
        <position position="219"/>
    </location>
</feature>
<feature type="modified residue" description="Phosphoserine" evidence="2">
    <location>
        <position position="227"/>
    </location>
</feature>
<feature type="modified residue" description="Phosphoserine" evidence="2">
    <location>
        <position position="233"/>
    </location>
</feature>
<evidence type="ECO:0000250" key="1"/>
<evidence type="ECO:0000250" key="2">
    <source>
        <dbReference type="UniProtKB" id="O60256"/>
    </source>
</evidence>
<evidence type="ECO:0000305" key="3"/>
<organism>
    <name type="scientific">Bos taurus</name>
    <name type="common">Bovine</name>
    <dbReference type="NCBI Taxonomy" id="9913"/>
    <lineage>
        <taxon>Eukaryota</taxon>
        <taxon>Metazoa</taxon>
        <taxon>Chordata</taxon>
        <taxon>Craniata</taxon>
        <taxon>Vertebrata</taxon>
        <taxon>Euteleostomi</taxon>
        <taxon>Mammalia</taxon>
        <taxon>Eutheria</taxon>
        <taxon>Laurasiatheria</taxon>
        <taxon>Artiodactyla</taxon>
        <taxon>Ruminantia</taxon>
        <taxon>Pecora</taxon>
        <taxon>Bovidae</taxon>
        <taxon>Bovinae</taxon>
        <taxon>Bos</taxon>
    </lineage>
</organism>
<protein>
    <recommendedName>
        <fullName>Phosphoribosyl pyrophosphate synthase-associated protein 2</fullName>
        <shortName>PRPP synthase-associated protein 2</shortName>
    </recommendedName>
</protein>
<dbReference type="EMBL" id="BC133374">
    <property type="protein sequence ID" value="AAI33375.1"/>
    <property type="molecule type" value="mRNA"/>
</dbReference>
<dbReference type="RefSeq" id="NP_001074982.1">
    <property type="nucleotide sequence ID" value="NM_001081513.1"/>
</dbReference>
<dbReference type="RefSeq" id="XP_024835543.1">
    <property type="nucleotide sequence ID" value="XM_024979775.2"/>
</dbReference>
<dbReference type="RefSeq" id="XP_024835544.1">
    <property type="nucleotide sequence ID" value="XM_024979776.2"/>
</dbReference>
<dbReference type="SMR" id="A2VDS0"/>
<dbReference type="FunCoup" id="A2VDS0">
    <property type="interactions" value="3336"/>
</dbReference>
<dbReference type="STRING" id="9913.ENSBTAP00000072613"/>
<dbReference type="PaxDb" id="9913-ENSBTAP00000019786"/>
<dbReference type="PeptideAtlas" id="A2VDS0"/>
<dbReference type="Ensembl" id="ENSBTAT00000019786.5">
    <property type="protein sequence ID" value="ENSBTAP00000019786.4"/>
    <property type="gene ID" value="ENSBTAG00000014858.6"/>
</dbReference>
<dbReference type="GeneID" id="506111"/>
<dbReference type="KEGG" id="bta:506111"/>
<dbReference type="CTD" id="5636"/>
<dbReference type="VEuPathDB" id="HostDB:ENSBTAG00000014858"/>
<dbReference type="VGNC" id="VGNC:33387">
    <property type="gene designation" value="PRPSAP2"/>
</dbReference>
<dbReference type="eggNOG" id="KOG1503">
    <property type="taxonomic scope" value="Eukaryota"/>
</dbReference>
<dbReference type="GeneTree" id="ENSGT00950000182803"/>
<dbReference type="HOGENOM" id="CLU_033546_0_0_1"/>
<dbReference type="InParanoid" id="A2VDS0"/>
<dbReference type="OMA" id="HYAYARS"/>
<dbReference type="OrthoDB" id="413572at2759"/>
<dbReference type="TreeFam" id="TF106367"/>
<dbReference type="Proteomes" id="UP000009136">
    <property type="component" value="Chromosome 19"/>
</dbReference>
<dbReference type="Bgee" id="ENSBTAG00000014858">
    <property type="expression patterns" value="Expressed in retropharyngeal lymph node and 108 other cell types or tissues"/>
</dbReference>
<dbReference type="GO" id="GO:0005737">
    <property type="term" value="C:cytoplasm"/>
    <property type="evidence" value="ECO:0000318"/>
    <property type="project" value="GO_Central"/>
</dbReference>
<dbReference type="GO" id="GO:0030234">
    <property type="term" value="F:enzyme regulator activity"/>
    <property type="evidence" value="ECO:0000318"/>
    <property type="project" value="GO_Central"/>
</dbReference>
<dbReference type="GO" id="GO:0000287">
    <property type="term" value="F:magnesium ion binding"/>
    <property type="evidence" value="ECO:0007669"/>
    <property type="project" value="InterPro"/>
</dbReference>
<dbReference type="GO" id="GO:0006015">
    <property type="term" value="P:5-phosphoribose 1-diphosphate biosynthetic process"/>
    <property type="evidence" value="ECO:0000318"/>
    <property type="project" value="GO_Central"/>
</dbReference>
<dbReference type="GO" id="GO:0006164">
    <property type="term" value="P:purine nucleotide biosynthetic process"/>
    <property type="evidence" value="ECO:0000318"/>
    <property type="project" value="GO_Central"/>
</dbReference>
<dbReference type="CDD" id="cd06223">
    <property type="entry name" value="PRTases_typeI"/>
    <property type="match status" value="1"/>
</dbReference>
<dbReference type="FunFam" id="3.40.50.2020:FF:000012">
    <property type="entry name" value="Phosphoribosyl pyrophosphate synthase-associated protein 2 isoform 1"/>
    <property type="match status" value="1"/>
</dbReference>
<dbReference type="FunFam" id="3.40.50.2020:FF:000014">
    <property type="entry name" value="Ribose-phosphate pyrophosphokinase 1"/>
    <property type="match status" value="1"/>
</dbReference>
<dbReference type="Gene3D" id="3.40.50.2020">
    <property type="match status" value="2"/>
</dbReference>
<dbReference type="InterPro" id="IPR029099">
    <property type="entry name" value="Pribosyltran_N"/>
</dbReference>
<dbReference type="InterPro" id="IPR000836">
    <property type="entry name" value="PRibTrfase_dom"/>
</dbReference>
<dbReference type="InterPro" id="IPR029057">
    <property type="entry name" value="PRTase-like"/>
</dbReference>
<dbReference type="InterPro" id="IPR005946">
    <property type="entry name" value="Rib-P_diPkinase"/>
</dbReference>
<dbReference type="NCBIfam" id="TIGR01251">
    <property type="entry name" value="ribP_PPkin"/>
    <property type="match status" value="1"/>
</dbReference>
<dbReference type="PANTHER" id="PTHR10210:SF29">
    <property type="entry name" value="PHOSPHORIBOSYL PYROPHOSPHATE SYNTHASE-ASSOCIATED PROTEIN 2"/>
    <property type="match status" value="1"/>
</dbReference>
<dbReference type="PANTHER" id="PTHR10210">
    <property type="entry name" value="RIBOSE-PHOSPHATE DIPHOSPHOKINASE FAMILY MEMBER"/>
    <property type="match status" value="1"/>
</dbReference>
<dbReference type="Pfam" id="PF14572">
    <property type="entry name" value="Pribosyl_synth"/>
    <property type="match status" value="1"/>
</dbReference>
<dbReference type="Pfam" id="PF13793">
    <property type="entry name" value="Pribosyltran_N"/>
    <property type="match status" value="1"/>
</dbReference>
<dbReference type="SMART" id="SM01400">
    <property type="entry name" value="Pribosyltran_N"/>
    <property type="match status" value="1"/>
</dbReference>
<dbReference type="SUPFAM" id="SSF53271">
    <property type="entry name" value="PRTase-like"/>
    <property type="match status" value="2"/>
</dbReference>
<name>KPRB_BOVIN</name>
<keyword id="KW-0007">Acetylation</keyword>
<keyword id="KW-0545">Nucleotide biosynthesis</keyword>
<keyword id="KW-0597">Phosphoprotein</keyword>
<keyword id="KW-1185">Reference proteome</keyword>
<proteinExistence type="evidence at transcript level"/>
<gene>
    <name type="primary">PRPSAP2</name>
</gene>
<comment type="function">
    <text evidence="1">Seems to play a negative regulatory role in 5-phosphoribose 1-diphosphate synthesis.</text>
</comment>
<comment type="subunit">
    <text evidence="1">Binds to PRPS1 and PRPS2.</text>
</comment>
<comment type="similarity">
    <text evidence="3">Belongs to the ribose-phosphate pyrophosphokinase family.</text>
</comment>
<reference key="1">
    <citation type="submission" date="2007-02" db="EMBL/GenBank/DDBJ databases">
        <authorList>
            <consortium name="NIH - Mammalian Gene Collection (MGC) project"/>
        </authorList>
    </citation>
    <scope>NUCLEOTIDE SEQUENCE [LARGE SCALE MRNA]</scope>
    <source>
        <strain>Hereford</strain>
        <tissue>Fetal skin</tissue>
    </source>
</reference>